<organismHost>
    <name type="scientific">Dryophytes versicolor</name>
    <name type="common">chameleon treefrog</name>
    <dbReference type="NCBI Taxonomy" id="30343"/>
</organismHost>
<organismHost>
    <name type="scientific">Lithobates pipiens</name>
    <name type="common">Northern leopard frog</name>
    <name type="synonym">Rana pipiens</name>
    <dbReference type="NCBI Taxonomy" id="8404"/>
</organismHost>
<organismHost>
    <name type="scientific">Lithobates sylvaticus</name>
    <name type="common">Wood frog</name>
    <name type="synonym">Rana sylvatica</name>
    <dbReference type="NCBI Taxonomy" id="45438"/>
</organismHost>
<organismHost>
    <name type="scientific">Notophthalmus viridescens</name>
    <name type="common">Eastern newt</name>
    <name type="synonym">Triturus viridescens</name>
    <dbReference type="NCBI Taxonomy" id="8316"/>
</organismHost>
<keyword id="KW-0007">Acetylation</keyword>
<keyword id="KW-0378">Hydrolase</keyword>
<keyword id="KW-0460">Magnesium</keyword>
<keyword id="KW-0479">Metal-binding</keyword>
<keyword id="KW-0546">Nucleotide metabolism</keyword>
<keyword id="KW-1185">Reference proteome</keyword>
<name>DUT_FRG3G</name>
<proteinExistence type="inferred from homology"/>
<accession>Q6GZR2</accession>
<reference key="1">
    <citation type="journal article" date="2004" name="Virology">
        <title>Comparative genomic analyses of frog virus 3, type species of the genus Ranavirus (family Iridoviridae).</title>
        <authorList>
            <person name="Tan W.G."/>
            <person name="Barkman T.J."/>
            <person name="Gregory Chinchar V."/>
            <person name="Essani K."/>
        </authorList>
    </citation>
    <scope>NUCLEOTIDE SEQUENCE [LARGE SCALE GENOMIC DNA]</scope>
</reference>
<sequence length="164" mass="17435">MHGNSLQYVKLSEHASGLIRGSAGAAGYDLAAAHPVVVPSFGRALVKTDLAVKMPPGLYGRVAPRSGLALKKFIDVGAGVVDPDYRGNLGVILFNFGCDPFRVKRGDRIAQLVLERYESPPILEVDSLDSTDRGDAGYGSTGVGNWHSALWEGFSSGDLKESFV</sequence>
<feature type="chain" id="PRO_0000410587" description="Putative deoxyuridine 5'-triphosphate nucleotidohydrolase">
    <location>
        <begin position="1"/>
        <end position="164"/>
    </location>
</feature>
<feature type="binding site" evidence="1">
    <location>
        <begin position="65"/>
        <end position="67"/>
    </location>
    <ligand>
        <name>substrate</name>
    </ligand>
</feature>
<feature type="binding site" evidence="1">
    <location>
        <begin position="79"/>
        <end position="82"/>
    </location>
    <ligand>
        <name>substrate</name>
    </ligand>
</feature>
<feature type="binding site" evidence="1">
    <location>
        <position position="90"/>
    </location>
    <ligand>
        <name>substrate</name>
    </ligand>
</feature>
<feature type="binding site" evidence="1">
    <location>
        <begin position="138"/>
        <end position="139"/>
    </location>
    <ligand>
        <name>substrate</name>
    </ligand>
</feature>
<feature type="modified residue" description="N6-acetyllysine; by host" evidence="1">
    <location>
        <position position="71"/>
    </location>
</feature>
<organism>
    <name type="scientific">Frog virus 3 (isolate Goorha)</name>
    <name type="common">FV-3</name>
    <dbReference type="NCBI Taxonomy" id="654924"/>
    <lineage>
        <taxon>Viruses</taxon>
        <taxon>Varidnaviria</taxon>
        <taxon>Bamfordvirae</taxon>
        <taxon>Nucleocytoviricota</taxon>
        <taxon>Megaviricetes</taxon>
        <taxon>Pimascovirales</taxon>
        <taxon>Iridoviridae</taxon>
        <taxon>Alphairidovirinae</taxon>
        <taxon>Ranavirus</taxon>
        <taxon>Frog virus 3</taxon>
    </lineage>
</organism>
<evidence type="ECO:0000250" key="1"/>
<evidence type="ECO:0000305" key="2"/>
<protein>
    <recommendedName>
        <fullName>Putative deoxyuridine 5'-triphosphate nucleotidohydrolase</fullName>
        <shortName>dUTPase</shortName>
        <ecNumber>3.6.1.23</ecNumber>
    </recommendedName>
</protein>
<comment type="function">
    <text evidence="1">This enzyme is involved in nucleotide metabolism: it produces dUMP, the immediate precursor of thymidine nucleotides and it decreases the intracellular concentration of dUTP so that uracil cannot be incorporated into DNA.</text>
</comment>
<comment type="catalytic activity">
    <reaction>
        <text>dUTP + H2O = dUMP + diphosphate + H(+)</text>
        <dbReference type="Rhea" id="RHEA:10248"/>
        <dbReference type="ChEBI" id="CHEBI:15377"/>
        <dbReference type="ChEBI" id="CHEBI:15378"/>
        <dbReference type="ChEBI" id="CHEBI:33019"/>
        <dbReference type="ChEBI" id="CHEBI:61555"/>
        <dbReference type="ChEBI" id="CHEBI:246422"/>
        <dbReference type="EC" id="3.6.1.23"/>
    </reaction>
</comment>
<comment type="cofactor">
    <cofactor evidence="1">
        <name>Mg(2+)</name>
        <dbReference type="ChEBI" id="CHEBI:18420"/>
    </cofactor>
</comment>
<comment type="similarity">
    <text evidence="2">Belongs to the dUTPase family.</text>
</comment>
<gene>
    <name type="ORF">FV3-063R</name>
</gene>
<dbReference type="EC" id="3.6.1.23"/>
<dbReference type="EMBL" id="AY548484">
    <property type="protein sequence ID" value="AAT09723.1"/>
    <property type="molecule type" value="Genomic_DNA"/>
</dbReference>
<dbReference type="RefSeq" id="YP_031642.1">
    <property type="nucleotide sequence ID" value="NC_005946.1"/>
</dbReference>
<dbReference type="SMR" id="Q6GZR2"/>
<dbReference type="KEGG" id="vg:2947763"/>
<dbReference type="Proteomes" id="UP000008770">
    <property type="component" value="Segment"/>
</dbReference>
<dbReference type="GO" id="GO:0004170">
    <property type="term" value="F:dUTP diphosphatase activity"/>
    <property type="evidence" value="ECO:0007669"/>
    <property type="project" value="UniProtKB-EC"/>
</dbReference>
<dbReference type="GO" id="GO:0000287">
    <property type="term" value="F:magnesium ion binding"/>
    <property type="evidence" value="ECO:0007669"/>
    <property type="project" value="InterPro"/>
</dbReference>
<dbReference type="GO" id="GO:0006226">
    <property type="term" value="P:dUMP biosynthetic process"/>
    <property type="evidence" value="ECO:0007669"/>
    <property type="project" value="InterPro"/>
</dbReference>
<dbReference type="GO" id="GO:0046081">
    <property type="term" value="P:dUTP catabolic process"/>
    <property type="evidence" value="ECO:0007669"/>
    <property type="project" value="InterPro"/>
</dbReference>
<dbReference type="CDD" id="cd07557">
    <property type="entry name" value="trimeric_dUTPase"/>
    <property type="match status" value="1"/>
</dbReference>
<dbReference type="Gene3D" id="2.70.40.10">
    <property type="match status" value="1"/>
</dbReference>
<dbReference type="InterPro" id="IPR008181">
    <property type="entry name" value="dUTPase"/>
</dbReference>
<dbReference type="InterPro" id="IPR029054">
    <property type="entry name" value="dUTPase-like"/>
</dbReference>
<dbReference type="InterPro" id="IPR036157">
    <property type="entry name" value="dUTPase-like_sf"/>
</dbReference>
<dbReference type="InterPro" id="IPR033704">
    <property type="entry name" value="dUTPase_trimeric"/>
</dbReference>
<dbReference type="NCBIfam" id="TIGR00576">
    <property type="entry name" value="dut"/>
    <property type="match status" value="1"/>
</dbReference>
<dbReference type="NCBIfam" id="NF001862">
    <property type="entry name" value="PRK00601.1"/>
    <property type="match status" value="1"/>
</dbReference>
<dbReference type="PANTHER" id="PTHR11241">
    <property type="entry name" value="DEOXYURIDINE 5'-TRIPHOSPHATE NUCLEOTIDOHYDROLASE"/>
    <property type="match status" value="1"/>
</dbReference>
<dbReference type="PANTHER" id="PTHR11241:SF0">
    <property type="entry name" value="DEOXYURIDINE 5'-TRIPHOSPHATE NUCLEOTIDOHYDROLASE"/>
    <property type="match status" value="1"/>
</dbReference>
<dbReference type="Pfam" id="PF00692">
    <property type="entry name" value="dUTPase"/>
    <property type="match status" value="1"/>
</dbReference>
<dbReference type="SUPFAM" id="SSF51283">
    <property type="entry name" value="dUTPase-like"/>
    <property type="match status" value="1"/>
</dbReference>